<organism>
    <name type="scientific">Dictyostelium citrinum</name>
    <name type="common">Slime mold</name>
    <dbReference type="NCBI Taxonomy" id="361072"/>
    <lineage>
        <taxon>Eukaryota</taxon>
        <taxon>Amoebozoa</taxon>
        <taxon>Evosea</taxon>
        <taxon>Eumycetozoa</taxon>
        <taxon>Dictyostelia</taxon>
        <taxon>Dictyosteliales</taxon>
        <taxon>Dictyosteliaceae</taxon>
        <taxon>Dictyostelium</taxon>
    </lineage>
</organism>
<evidence type="ECO:0000305" key="1"/>
<geneLocation type="mitochondrion"/>
<reference key="1">
    <citation type="journal article" date="2008" name="Mol. Biol. Evol.">
        <title>Mitochondrial genome evolution in the social amoebae.</title>
        <authorList>
            <person name="Heidel A.J."/>
            <person name="Gloeckner G."/>
        </authorList>
    </citation>
    <scope>NUCLEOTIDE SEQUENCE [LARGE SCALE GENOMIC DNA]</scope>
</reference>
<protein>
    <recommendedName>
        <fullName evidence="1">Small ribosomal subunit protein uS8m</fullName>
    </recommendedName>
    <alternativeName>
        <fullName>Ribosomal protein S8, mitochondrial</fullName>
    </alternativeName>
</protein>
<keyword id="KW-0496">Mitochondrion</keyword>
<keyword id="KW-0687">Ribonucleoprotein</keyword>
<keyword id="KW-0689">Ribosomal protein</keyword>
<proteinExistence type="inferred from homology"/>
<feature type="chain" id="PRO_0000312405" description="Small ribosomal subunit protein uS8m">
    <location>
        <begin position="1"/>
        <end position="152"/>
    </location>
</feature>
<name>RT08_DICCI</name>
<gene>
    <name type="primary">mrps8</name>
    <name type="synonym">rps8</name>
</gene>
<comment type="subcellular location">
    <subcellularLocation>
        <location>Mitochondrion</location>
    </subcellularLocation>
</comment>
<comment type="similarity">
    <text evidence="1">Belongs to the universal ribosomal protein uS8 family.</text>
</comment>
<sequence length="152" mass="17457">MKKIQNVFAAIKTGLLAKATCVTVNGSKRVFEVLSAFENEGLIRGFQIIDIKTNKVSIYLKYKQDMTSLLSRIKAVSVNKEKLYLKGKVLTKFYPRVNLYFIESKFGLKTLPQLQLRNKMLKTPIGGEIKYIIEINKVNPKLQELMKKKNEI</sequence>
<dbReference type="EMBL" id="DQ336395">
    <property type="protein sequence ID" value="ABC60403.1"/>
    <property type="molecule type" value="Genomic_DNA"/>
</dbReference>
<dbReference type="RefSeq" id="YP_492652.1">
    <property type="nucleotide sequence ID" value="NC_007787.2"/>
</dbReference>
<dbReference type="SMR" id="Q2LCP0"/>
<dbReference type="GeneID" id="3912640"/>
<dbReference type="GO" id="GO:0005739">
    <property type="term" value="C:mitochondrion"/>
    <property type="evidence" value="ECO:0007669"/>
    <property type="project" value="UniProtKB-SubCell"/>
</dbReference>
<dbReference type="GO" id="GO:1990904">
    <property type="term" value="C:ribonucleoprotein complex"/>
    <property type="evidence" value="ECO:0007669"/>
    <property type="project" value="UniProtKB-KW"/>
</dbReference>
<dbReference type="GO" id="GO:0005840">
    <property type="term" value="C:ribosome"/>
    <property type="evidence" value="ECO:0007669"/>
    <property type="project" value="UniProtKB-KW"/>
</dbReference>
<dbReference type="GO" id="GO:0003735">
    <property type="term" value="F:structural constituent of ribosome"/>
    <property type="evidence" value="ECO:0007669"/>
    <property type="project" value="InterPro"/>
</dbReference>
<dbReference type="GO" id="GO:0006412">
    <property type="term" value="P:translation"/>
    <property type="evidence" value="ECO:0007669"/>
    <property type="project" value="InterPro"/>
</dbReference>
<dbReference type="Gene3D" id="3.30.1370.30">
    <property type="match status" value="1"/>
</dbReference>
<dbReference type="InterPro" id="IPR000630">
    <property type="entry name" value="Ribosomal_uS8"/>
</dbReference>
<dbReference type="InterPro" id="IPR035987">
    <property type="entry name" value="Ribosomal_uS8_sf"/>
</dbReference>
<dbReference type="Pfam" id="PF00410">
    <property type="entry name" value="Ribosomal_S8"/>
    <property type="match status" value="1"/>
</dbReference>
<dbReference type="SUPFAM" id="SSF56047">
    <property type="entry name" value="Ribosomal protein S8"/>
    <property type="match status" value="1"/>
</dbReference>
<accession>Q2LCP0</accession>